<organism>
    <name type="scientific">Paraburkholderia phytofirmans (strain DSM 17436 / LMG 22146 / PsJN)</name>
    <name type="common">Burkholderia phytofirmans</name>
    <dbReference type="NCBI Taxonomy" id="398527"/>
    <lineage>
        <taxon>Bacteria</taxon>
        <taxon>Pseudomonadati</taxon>
        <taxon>Pseudomonadota</taxon>
        <taxon>Betaproteobacteria</taxon>
        <taxon>Burkholderiales</taxon>
        <taxon>Burkholderiaceae</taxon>
        <taxon>Paraburkholderia</taxon>
    </lineage>
</organism>
<reference key="1">
    <citation type="journal article" date="2011" name="J. Bacteriol.">
        <title>Complete genome sequence of the plant growth-promoting endophyte Burkholderia phytofirmans strain PsJN.</title>
        <authorList>
            <person name="Weilharter A."/>
            <person name="Mitter B."/>
            <person name="Shin M.V."/>
            <person name="Chain P.S."/>
            <person name="Nowak J."/>
            <person name="Sessitsch A."/>
        </authorList>
    </citation>
    <scope>NUCLEOTIDE SEQUENCE [LARGE SCALE GENOMIC DNA]</scope>
    <source>
        <strain>DSM 17436 / LMG 22146 / PsJN</strain>
    </source>
</reference>
<keyword id="KW-0963">Cytoplasm</keyword>
<keyword id="KW-0448">Lipopolysaccharide biosynthesis</keyword>
<keyword id="KW-0548">Nucleotidyltransferase</keyword>
<keyword id="KW-0808">Transferase</keyword>
<evidence type="ECO:0000255" key="1">
    <source>
        <dbReference type="HAMAP-Rule" id="MF_00057"/>
    </source>
</evidence>
<accession>B2TAY9</accession>
<comment type="function">
    <text evidence="1">Activates KDO (a required 8-carbon sugar) for incorporation into bacterial lipopolysaccharide in Gram-negative bacteria.</text>
</comment>
<comment type="catalytic activity">
    <reaction evidence="1">
        <text>3-deoxy-alpha-D-manno-oct-2-ulosonate + CTP = CMP-3-deoxy-beta-D-manno-octulosonate + diphosphate</text>
        <dbReference type="Rhea" id="RHEA:23448"/>
        <dbReference type="ChEBI" id="CHEBI:33019"/>
        <dbReference type="ChEBI" id="CHEBI:37563"/>
        <dbReference type="ChEBI" id="CHEBI:85986"/>
        <dbReference type="ChEBI" id="CHEBI:85987"/>
        <dbReference type="EC" id="2.7.7.38"/>
    </reaction>
</comment>
<comment type="pathway">
    <text evidence="1">Nucleotide-sugar biosynthesis; CMP-3-deoxy-D-manno-octulosonate biosynthesis; CMP-3-deoxy-D-manno-octulosonate from 3-deoxy-D-manno-octulosonate and CTP: step 1/1.</text>
</comment>
<comment type="pathway">
    <text evidence="1">Bacterial outer membrane biogenesis; lipopolysaccharide biosynthesis.</text>
</comment>
<comment type="subcellular location">
    <subcellularLocation>
        <location evidence="1">Cytoplasm</location>
    </subcellularLocation>
</comment>
<comment type="similarity">
    <text evidence="1">Belongs to the KdsB family.</text>
</comment>
<dbReference type="EC" id="2.7.7.38" evidence="1"/>
<dbReference type="EMBL" id="CP001053">
    <property type="protein sequence ID" value="ACD20585.1"/>
    <property type="molecule type" value="Genomic_DNA"/>
</dbReference>
<dbReference type="RefSeq" id="WP_012428093.1">
    <property type="nucleotide sequence ID" value="NC_010676.1"/>
</dbReference>
<dbReference type="SMR" id="B2TAY9"/>
<dbReference type="STRING" id="398527.Bphyt_6258"/>
<dbReference type="KEGG" id="bpy:Bphyt_6258"/>
<dbReference type="eggNOG" id="COG1212">
    <property type="taxonomic scope" value="Bacteria"/>
</dbReference>
<dbReference type="HOGENOM" id="CLU_065038_1_0_4"/>
<dbReference type="OrthoDB" id="9815559at2"/>
<dbReference type="UniPathway" id="UPA00030"/>
<dbReference type="UniPathway" id="UPA00358">
    <property type="reaction ID" value="UER00476"/>
</dbReference>
<dbReference type="Proteomes" id="UP000001739">
    <property type="component" value="Chromosome 2"/>
</dbReference>
<dbReference type="GO" id="GO:0005829">
    <property type="term" value="C:cytosol"/>
    <property type="evidence" value="ECO:0007669"/>
    <property type="project" value="TreeGrafter"/>
</dbReference>
<dbReference type="GO" id="GO:0008690">
    <property type="term" value="F:3-deoxy-manno-octulosonate cytidylyltransferase activity"/>
    <property type="evidence" value="ECO:0007669"/>
    <property type="project" value="UniProtKB-UniRule"/>
</dbReference>
<dbReference type="GO" id="GO:0033468">
    <property type="term" value="P:CMP-keto-3-deoxy-D-manno-octulosonic acid biosynthetic process"/>
    <property type="evidence" value="ECO:0007669"/>
    <property type="project" value="UniProtKB-UniRule"/>
</dbReference>
<dbReference type="GO" id="GO:0009103">
    <property type="term" value="P:lipopolysaccharide biosynthetic process"/>
    <property type="evidence" value="ECO:0007669"/>
    <property type="project" value="UniProtKB-UniRule"/>
</dbReference>
<dbReference type="CDD" id="cd02517">
    <property type="entry name" value="CMP-KDO-Synthetase"/>
    <property type="match status" value="1"/>
</dbReference>
<dbReference type="FunFam" id="3.90.550.10:FF:000011">
    <property type="entry name" value="3-deoxy-manno-octulosonate cytidylyltransferase"/>
    <property type="match status" value="1"/>
</dbReference>
<dbReference type="Gene3D" id="3.90.550.10">
    <property type="entry name" value="Spore Coat Polysaccharide Biosynthesis Protein SpsA, Chain A"/>
    <property type="match status" value="1"/>
</dbReference>
<dbReference type="HAMAP" id="MF_00057">
    <property type="entry name" value="KdsB"/>
    <property type="match status" value="1"/>
</dbReference>
<dbReference type="InterPro" id="IPR003329">
    <property type="entry name" value="Cytidylyl_trans"/>
</dbReference>
<dbReference type="InterPro" id="IPR004528">
    <property type="entry name" value="KdsB"/>
</dbReference>
<dbReference type="InterPro" id="IPR029044">
    <property type="entry name" value="Nucleotide-diphossugar_trans"/>
</dbReference>
<dbReference type="NCBIfam" id="TIGR00466">
    <property type="entry name" value="kdsB"/>
    <property type="match status" value="1"/>
</dbReference>
<dbReference type="NCBIfam" id="NF003952">
    <property type="entry name" value="PRK05450.1-5"/>
    <property type="match status" value="1"/>
</dbReference>
<dbReference type="PANTHER" id="PTHR42866">
    <property type="entry name" value="3-DEOXY-MANNO-OCTULOSONATE CYTIDYLYLTRANSFERASE"/>
    <property type="match status" value="1"/>
</dbReference>
<dbReference type="PANTHER" id="PTHR42866:SF2">
    <property type="entry name" value="3-DEOXY-MANNO-OCTULOSONATE CYTIDYLYLTRANSFERASE, MITOCHONDRIAL"/>
    <property type="match status" value="1"/>
</dbReference>
<dbReference type="Pfam" id="PF02348">
    <property type="entry name" value="CTP_transf_3"/>
    <property type="match status" value="1"/>
</dbReference>
<dbReference type="SUPFAM" id="SSF53448">
    <property type="entry name" value="Nucleotide-diphospho-sugar transferases"/>
    <property type="match status" value="1"/>
</dbReference>
<name>KDSB2_PARPJ</name>
<feature type="chain" id="PRO_0000370034" description="3-deoxy-manno-octulosonate cytidylyltransferase 2">
    <location>
        <begin position="1"/>
        <end position="263"/>
    </location>
</feature>
<sequence length="263" mass="29101">MRSSSDPASIHVVIPARFGSTRLPGKPLIDLAGEPMIVRVYEAVRAALPETVNIVVATDDERIVGSLEAYRIPVRMTDPEHQSGTDRCAQVARELGWNSDDLVVNVQGDEPLVPQPLLASFVQFCANAQAFDMATVAVPLTEVSHLTDPNVVKLVVGAQGQAIVFSRSAIPFCRDLPQNEWPLSAYLRHVGIYAYRCSALYRLTETPSCELEELERLEQMRAIWLGMPIRVFEWPEPPPPGVDTKEDVARVREILFVNASGRS</sequence>
<gene>
    <name evidence="1" type="primary">kdsB2</name>
    <name type="ordered locus">Bphyt_6258</name>
</gene>
<protein>
    <recommendedName>
        <fullName evidence="1">3-deoxy-manno-octulosonate cytidylyltransferase 2</fullName>
        <ecNumber evidence="1">2.7.7.38</ecNumber>
    </recommendedName>
    <alternativeName>
        <fullName evidence="1">CMP-2-keto-3-deoxyoctulosonic acid synthase 2</fullName>
        <shortName evidence="1">CKS 2</shortName>
        <shortName evidence="1">CMP-KDO synthase 2</shortName>
    </alternativeName>
</protein>
<proteinExistence type="inferred from homology"/>